<sequence>MTDSYQMEDIKNSNETSISLQNVTISYGDSDAVRNVYFDIPKYKVTSLIGPSGCGKSTVLRSLNRMNDLISSCTLKGLILFEGLDLYSDQIDPVEVRRKIGMVFQQPNPFPKSIYENIAFGARINGFSGNLDELVEDSLRKAAVWDECKDKLNESGYSLSGGQQQRLCIARTIAIKPDVILMDEPCSALDPISTIKIEETIHELKKNFTIVIVTHNMQQALRVSDKTAFFNAAEKGGTDDGKVGYLVEFDKTKKIFNSPKEKATQDYISGKFG</sequence>
<dbReference type="EC" id="7.3.2.1" evidence="1"/>
<dbReference type="EMBL" id="AE017126">
    <property type="protein sequence ID" value="AAP99641.1"/>
    <property type="molecule type" value="Genomic_DNA"/>
</dbReference>
<dbReference type="RefSeq" id="NP_874989.1">
    <property type="nucleotide sequence ID" value="NC_005042.1"/>
</dbReference>
<dbReference type="RefSeq" id="WP_011124749.1">
    <property type="nucleotide sequence ID" value="NC_005042.1"/>
</dbReference>
<dbReference type="SMR" id="Q7VCZ3"/>
<dbReference type="STRING" id="167539.Pro_0596"/>
<dbReference type="EnsemblBacteria" id="AAP99641">
    <property type="protein sequence ID" value="AAP99641"/>
    <property type="gene ID" value="Pro_0596"/>
</dbReference>
<dbReference type="KEGG" id="pma:Pro_0596"/>
<dbReference type="PATRIC" id="fig|167539.5.peg.613"/>
<dbReference type="eggNOG" id="COG1117">
    <property type="taxonomic scope" value="Bacteria"/>
</dbReference>
<dbReference type="HOGENOM" id="CLU_000604_1_22_3"/>
<dbReference type="OrthoDB" id="9802185at2"/>
<dbReference type="Proteomes" id="UP000001420">
    <property type="component" value="Chromosome"/>
</dbReference>
<dbReference type="GO" id="GO:0005886">
    <property type="term" value="C:plasma membrane"/>
    <property type="evidence" value="ECO:0007669"/>
    <property type="project" value="UniProtKB-SubCell"/>
</dbReference>
<dbReference type="GO" id="GO:0005524">
    <property type="term" value="F:ATP binding"/>
    <property type="evidence" value="ECO:0007669"/>
    <property type="project" value="UniProtKB-KW"/>
</dbReference>
<dbReference type="GO" id="GO:0016887">
    <property type="term" value="F:ATP hydrolysis activity"/>
    <property type="evidence" value="ECO:0007669"/>
    <property type="project" value="InterPro"/>
</dbReference>
<dbReference type="GO" id="GO:0015415">
    <property type="term" value="F:ATPase-coupled phosphate ion transmembrane transporter activity"/>
    <property type="evidence" value="ECO:0007669"/>
    <property type="project" value="UniProtKB-EC"/>
</dbReference>
<dbReference type="GO" id="GO:0035435">
    <property type="term" value="P:phosphate ion transmembrane transport"/>
    <property type="evidence" value="ECO:0007669"/>
    <property type="project" value="InterPro"/>
</dbReference>
<dbReference type="CDD" id="cd03260">
    <property type="entry name" value="ABC_PstB_phosphate_transporter"/>
    <property type="match status" value="1"/>
</dbReference>
<dbReference type="Gene3D" id="3.40.50.300">
    <property type="entry name" value="P-loop containing nucleotide triphosphate hydrolases"/>
    <property type="match status" value="1"/>
</dbReference>
<dbReference type="InterPro" id="IPR003593">
    <property type="entry name" value="AAA+_ATPase"/>
</dbReference>
<dbReference type="InterPro" id="IPR003439">
    <property type="entry name" value="ABC_transporter-like_ATP-bd"/>
</dbReference>
<dbReference type="InterPro" id="IPR017871">
    <property type="entry name" value="ABC_transporter-like_CS"/>
</dbReference>
<dbReference type="InterPro" id="IPR027417">
    <property type="entry name" value="P-loop_NTPase"/>
</dbReference>
<dbReference type="InterPro" id="IPR005670">
    <property type="entry name" value="PstB-like"/>
</dbReference>
<dbReference type="NCBIfam" id="TIGR00972">
    <property type="entry name" value="3a0107s01c2"/>
    <property type="match status" value="1"/>
</dbReference>
<dbReference type="PANTHER" id="PTHR43423">
    <property type="entry name" value="ABC TRANSPORTER I FAMILY MEMBER 17"/>
    <property type="match status" value="1"/>
</dbReference>
<dbReference type="PANTHER" id="PTHR43423:SF1">
    <property type="entry name" value="ABC TRANSPORTER I FAMILY MEMBER 17"/>
    <property type="match status" value="1"/>
</dbReference>
<dbReference type="Pfam" id="PF00005">
    <property type="entry name" value="ABC_tran"/>
    <property type="match status" value="1"/>
</dbReference>
<dbReference type="SMART" id="SM00382">
    <property type="entry name" value="AAA"/>
    <property type="match status" value="1"/>
</dbReference>
<dbReference type="SUPFAM" id="SSF52540">
    <property type="entry name" value="P-loop containing nucleoside triphosphate hydrolases"/>
    <property type="match status" value="1"/>
</dbReference>
<dbReference type="PROSITE" id="PS00211">
    <property type="entry name" value="ABC_TRANSPORTER_1"/>
    <property type="match status" value="1"/>
</dbReference>
<dbReference type="PROSITE" id="PS50893">
    <property type="entry name" value="ABC_TRANSPORTER_2"/>
    <property type="match status" value="1"/>
</dbReference>
<dbReference type="PROSITE" id="PS51238">
    <property type="entry name" value="PSTB"/>
    <property type="match status" value="1"/>
</dbReference>
<evidence type="ECO:0000255" key="1">
    <source>
        <dbReference type="HAMAP-Rule" id="MF_01702"/>
    </source>
</evidence>
<organism>
    <name type="scientific">Prochlorococcus marinus (strain SARG / CCMP1375 / SS120)</name>
    <dbReference type="NCBI Taxonomy" id="167539"/>
    <lineage>
        <taxon>Bacteria</taxon>
        <taxon>Bacillati</taxon>
        <taxon>Cyanobacteriota</taxon>
        <taxon>Cyanophyceae</taxon>
        <taxon>Synechococcales</taxon>
        <taxon>Prochlorococcaceae</taxon>
        <taxon>Prochlorococcus</taxon>
    </lineage>
</organism>
<feature type="chain" id="PRO_0000092858" description="Phosphate import ATP-binding protein PstB">
    <location>
        <begin position="1"/>
        <end position="273"/>
    </location>
</feature>
<feature type="domain" description="ABC transporter" evidence="1">
    <location>
        <begin position="18"/>
        <end position="257"/>
    </location>
</feature>
<feature type="binding site" evidence="1">
    <location>
        <begin position="50"/>
        <end position="57"/>
    </location>
    <ligand>
        <name>ATP</name>
        <dbReference type="ChEBI" id="CHEBI:30616"/>
    </ligand>
</feature>
<protein>
    <recommendedName>
        <fullName evidence="1">Phosphate import ATP-binding protein PstB</fullName>
        <ecNumber evidence="1">7.3.2.1</ecNumber>
    </recommendedName>
    <alternativeName>
        <fullName evidence="1">ABC phosphate transporter</fullName>
    </alternativeName>
    <alternativeName>
        <fullName evidence="1">Phosphate-transporting ATPase</fullName>
    </alternativeName>
</protein>
<gene>
    <name evidence="1" type="primary">pstB</name>
    <name type="ordered locus">Pro_0596</name>
</gene>
<accession>Q7VCZ3</accession>
<reference key="1">
    <citation type="journal article" date="2003" name="Proc. Natl. Acad. Sci. U.S.A.">
        <title>Genome sequence of the cyanobacterium Prochlorococcus marinus SS120, a nearly minimal oxyphototrophic genome.</title>
        <authorList>
            <person name="Dufresne A."/>
            <person name="Salanoubat M."/>
            <person name="Partensky F."/>
            <person name="Artiguenave F."/>
            <person name="Axmann I.M."/>
            <person name="Barbe V."/>
            <person name="Duprat S."/>
            <person name="Galperin M.Y."/>
            <person name="Koonin E.V."/>
            <person name="Le Gall F."/>
            <person name="Makarova K.S."/>
            <person name="Ostrowski M."/>
            <person name="Oztas S."/>
            <person name="Robert C."/>
            <person name="Rogozin I.B."/>
            <person name="Scanlan D.J."/>
            <person name="Tandeau de Marsac N."/>
            <person name="Weissenbach J."/>
            <person name="Wincker P."/>
            <person name="Wolf Y.I."/>
            <person name="Hess W.R."/>
        </authorList>
    </citation>
    <scope>NUCLEOTIDE SEQUENCE [LARGE SCALE GENOMIC DNA]</scope>
    <source>
        <strain>SARG / CCMP1375 / SS120</strain>
    </source>
</reference>
<proteinExistence type="inferred from homology"/>
<comment type="function">
    <text evidence="1">Part of the ABC transporter complex PstSACB involved in phosphate import. Responsible for energy coupling to the transport system.</text>
</comment>
<comment type="catalytic activity">
    <reaction evidence="1">
        <text>phosphate(out) + ATP + H2O = ADP + 2 phosphate(in) + H(+)</text>
        <dbReference type="Rhea" id="RHEA:24440"/>
        <dbReference type="ChEBI" id="CHEBI:15377"/>
        <dbReference type="ChEBI" id="CHEBI:15378"/>
        <dbReference type="ChEBI" id="CHEBI:30616"/>
        <dbReference type="ChEBI" id="CHEBI:43474"/>
        <dbReference type="ChEBI" id="CHEBI:456216"/>
        <dbReference type="EC" id="7.3.2.1"/>
    </reaction>
</comment>
<comment type="subunit">
    <text evidence="1">The complex is composed of two ATP-binding proteins (PstB), two transmembrane proteins (PstC and PstA) and a solute-binding protein (PstS).</text>
</comment>
<comment type="subcellular location">
    <subcellularLocation>
        <location evidence="1">Cell inner membrane</location>
        <topology evidence="1">Peripheral membrane protein</topology>
    </subcellularLocation>
</comment>
<comment type="similarity">
    <text evidence="1">Belongs to the ABC transporter superfamily. Phosphate importer (TC 3.A.1.7) family.</text>
</comment>
<keyword id="KW-0067">ATP-binding</keyword>
<keyword id="KW-0997">Cell inner membrane</keyword>
<keyword id="KW-1003">Cell membrane</keyword>
<keyword id="KW-0472">Membrane</keyword>
<keyword id="KW-0547">Nucleotide-binding</keyword>
<keyword id="KW-0592">Phosphate transport</keyword>
<keyword id="KW-1185">Reference proteome</keyword>
<keyword id="KW-1278">Translocase</keyword>
<keyword id="KW-0813">Transport</keyword>
<name>PSTB_PROMA</name>